<proteinExistence type="inferred from homology"/>
<dbReference type="EMBL" id="CP001083">
    <property type="protein sequence ID" value="ACQ55140.1"/>
    <property type="molecule type" value="Genomic_DNA"/>
</dbReference>
<dbReference type="RefSeq" id="WP_003362318.1">
    <property type="nucleotide sequence ID" value="NC_012658.1"/>
</dbReference>
<dbReference type="KEGG" id="cbi:CLJ_B1488"/>
<dbReference type="HOGENOM" id="CLU_094511_0_1_9"/>
<dbReference type="Proteomes" id="UP000002333">
    <property type="component" value="Chromosome"/>
</dbReference>
<dbReference type="HAMAP" id="MF_00674">
    <property type="entry name" value="UPF0251"/>
    <property type="match status" value="1"/>
</dbReference>
<dbReference type="InterPro" id="IPR013324">
    <property type="entry name" value="RNA_pol_sigma_r3/r4-like"/>
</dbReference>
<dbReference type="InterPro" id="IPR002852">
    <property type="entry name" value="UPF0251"/>
</dbReference>
<dbReference type="PANTHER" id="PTHR37478">
    <property type="match status" value="1"/>
</dbReference>
<dbReference type="PANTHER" id="PTHR37478:SF2">
    <property type="entry name" value="UPF0251 PROTEIN TK0562"/>
    <property type="match status" value="1"/>
</dbReference>
<dbReference type="Pfam" id="PF02001">
    <property type="entry name" value="DUF134"/>
    <property type="match status" value="1"/>
</dbReference>
<dbReference type="SUPFAM" id="SSF88659">
    <property type="entry name" value="Sigma3 and sigma4 domains of RNA polymerase sigma factors"/>
    <property type="match status" value="1"/>
</dbReference>
<gene>
    <name type="ordered locus">CLJ_B1488</name>
</gene>
<protein>
    <recommendedName>
        <fullName evidence="1">UPF0251 protein CLJ_B1488</fullName>
    </recommendedName>
</protein>
<comment type="similarity">
    <text evidence="1">Belongs to the UPF0251 family.</text>
</comment>
<name>Y1488_CLOB6</name>
<accession>C3KUP0</accession>
<reference key="1">
    <citation type="submission" date="2008-05" db="EMBL/GenBank/DDBJ databases">
        <title>Genome sequence of Clostridium botulinum Ba4 strain 657.</title>
        <authorList>
            <person name="Shrivastava S."/>
            <person name="Brown J.L."/>
            <person name="Bruce D."/>
            <person name="Detter C."/>
            <person name="Munk C."/>
            <person name="Smith L.A."/>
            <person name="Smith T.J."/>
            <person name="Sutton G."/>
            <person name="Brettin T.S."/>
        </authorList>
    </citation>
    <scope>NUCLEOTIDE SEQUENCE [LARGE SCALE GENOMIC DNA]</scope>
    <source>
        <strain>657 / Type Ba4</strain>
    </source>
</reference>
<sequence length="157" mass="18509">MPRPTKFRRVEFFPENNYFVPWGKPKCEIHEVVLKVEELEAMRLKDIEELNQEQCAEKMEISRQTFQNIIDSARKKVAIALTKGKAIKISGGHYTTKLCKLKCIDCGEIYEINYEQDRHLCPNCGSEKVICNKKADFCRRWCKGQNRKEQYEESKNK</sequence>
<organism>
    <name type="scientific">Clostridium botulinum (strain 657 / Type Ba4)</name>
    <dbReference type="NCBI Taxonomy" id="515621"/>
    <lineage>
        <taxon>Bacteria</taxon>
        <taxon>Bacillati</taxon>
        <taxon>Bacillota</taxon>
        <taxon>Clostridia</taxon>
        <taxon>Eubacteriales</taxon>
        <taxon>Clostridiaceae</taxon>
        <taxon>Clostridium</taxon>
    </lineage>
</organism>
<evidence type="ECO:0000255" key="1">
    <source>
        <dbReference type="HAMAP-Rule" id="MF_00674"/>
    </source>
</evidence>
<feature type="chain" id="PRO_1000212514" description="UPF0251 protein CLJ_B1488">
    <location>
        <begin position="1"/>
        <end position="157"/>
    </location>
</feature>